<reference evidence="5 6" key="1">
    <citation type="journal article" date="2012" name="J. Bacteriol.">
        <title>Genome sequence of the haloalkaliphilic methanotrophic bacterium Methylomicrobium alcaliphilum 20Z.</title>
        <authorList>
            <person name="Vuilleumier S."/>
            <person name="Khmelenina V.N."/>
            <person name="Bringel F."/>
            <person name="Reshetnikov A.S."/>
            <person name="Lajus A."/>
            <person name="Mangenot S."/>
            <person name="Rouy Z."/>
            <person name="Op den Camp H.J."/>
            <person name="Jetten M.S."/>
            <person name="Dispirito A.A."/>
            <person name="Dunfield P."/>
            <person name="Klotz M.G."/>
            <person name="Semrau J.D."/>
            <person name="Stein L.Y."/>
            <person name="Barbe V."/>
            <person name="Medigue C."/>
            <person name="Trotsenko Y.A."/>
            <person name="Kalyuzhnaya M.G."/>
        </authorList>
    </citation>
    <scope>NUCLEOTIDE SEQUENCE [LARGE SCALE GENOMIC DNA]</scope>
    <source>
        <strain evidence="6">DSM 19304 / NCIMB 14124 / VKM B-2133 / 20Z</strain>
    </source>
</reference>
<reference evidence="7" key="2">
    <citation type="journal article" date="2015" name="Nature">
        <title>Structure of an integral membrane sterol reductase from Methylomicrobium alcaliphilum.</title>
        <authorList>
            <person name="Li X."/>
            <person name="Roberti R."/>
            <person name="Blobel G."/>
        </authorList>
    </citation>
    <scope>X-RAY CRYSTALLOGRAPHY (2.74 ANGSTROMS) IN COMPLEX WITH NADPH</scope>
    <scope>FUNCTION</scope>
    <scope>CATALYTIC ACTIVITY</scope>
    <scope>SUBCELLULAR LOCATION</scope>
    <scope>TOPOLOGY</scope>
    <scope>MUTAGENESIS OF TYR-241; TRP-352; ASN-359; TYR-360; ASP-363; ARG-395; LYS-406; TYR-407 AND TYR-414</scope>
    <source>
        <strain evidence="2">DSM 19304 / NCIMB 14124 / VKM B-2133 / 20Z</strain>
    </source>
</reference>
<comment type="function">
    <text evidence="1">Reduces the C14=C15 double bond of 4,4-dimethyl-cholesta-8,14,24-trienol to produce 4,4-dimethyl-cholesta-8,24-dienol. Complements the deletion of the Delta(14)-sterol reductase gene ERG24 in yeast.</text>
</comment>
<comment type="catalytic activity">
    <reaction evidence="1">
        <text>4,4-dimethyl-5alpha-cholesta-8,24-dien-3beta-ol + NADP(+) = 4,4-dimethyl-5alpha-cholesta-8,14,24-trien-3beta-ol + NADPH + H(+)</text>
        <dbReference type="Rhea" id="RHEA:18561"/>
        <dbReference type="ChEBI" id="CHEBI:15378"/>
        <dbReference type="ChEBI" id="CHEBI:17813"/>
        <dbReference type="ChEBI" id="CHEBI:18364"/>
        <dbReference type="ChEBI" id="CHEBI:57783"/>
        <dbReference type="ChEBI" id="CHEBI:58349"/>
        <dbReference type="EC" id="1.3.1.70"/>
    </reaction>
</comment>
<comment type="pathway">
    <text evidence="3">Steroid biosynthesis; zymosterol biosynthesis; zymosterol from lanosterol.</text>
</comment>
<comment type="subcellular location">
    <subcellularLocation>
        <location evidence="4">Cell inner membrane</location>
        <topology evidence="1">Multi-pass membrane protein</topology>
    </subcellularLocation>
</comment>
<comment type="similarity">
    <text evidence="3">Belongs to the ERG4/ERG24 family.</text>
</comment>
<gene>
    <name evidence="5" type="primary">erg</name>
    <name evidence="5" type="ordered locus">MEALZ_1312</name>
</gene>
<evidence type="ECO:0000269" key="1">
    <source>
    </source>
</evidence>
<evidence type="ECO:0000303" key="2">
    <source>
    </source>
</evidence>
<evidence type="ECO:0000305" key="3"/>
<evidence type="ECO:0000305" key="4">
    <source>
    </source>
</evidence>
<evidence type="ECO:0000312" key="5">
    <source>
        <dbReference type="EMBL" id="CCE23001.1"/>
    </source>
</evidence>
<evidence type="ECO:0000312" key="6">
    <source>
        <dbReference type="Proteomes" id="UP000008315"/>
    </source>
</evidence>
<evidence type="ECO:0007744" key="7">
    <source>
        <dbReference type="PDB" id="4QUV"/>
    </source>
</evidence>
<evidence type="ECO:0007829" key="8">
    <source>
        <dbReference type="PDB" id="4QUV"/>
    </source>
</evidence>
<protein>
    <recommendedName>
        <fullName evidence="2 5">Delta(14)-sterol reductase</fullName>
        <ecNumber evidence="1 5">1.3.1.70</ecNumber>
    </recommendedName>
    <alternativeName>
        <fullName evidence="3">C-14 sterol reductase</fullName>
        <shortName evidence="2">C14SR</shortName>
    </alternativeName>
    <alternativeName>
        <fullName evidence="2">MaSR1</fullName>
    </alternativeName>
    <alternativeName>
        <fullName evidence="3">Sterol C14-reductase</fullName>
    </alternativeName>
</protein>
<keyword id="KW-0002">3D-structure</keyword>
<keyword id="KW-0997">Cell inner membrane</keyword>
<keyword id="KW-1003">Cell membrane</keyword>
<keyword id="KW-0444">Lipid biosynthesis</keyword>
<keyword id="KW-0443">Lipid metabolism</keyword>
<keyword id="KW-0472">Membrane</keyword>
<keyword id="KW-0521">NADP</keyword>
<keyword id="KW-0547">Nucleotide-binding</keyword>
<keyword id="KW-0560">Oxidoreductase</keyword>
<keyword id="KW-1185">Reference proteome</keyword>
<keyword id="KW-0752">Steroid biosynthesis</keyword>
<keyword id="KW-0753">Steroid metabolism</keyword>
<keyword id="KW-0756">Sterol biosynthesis</keyword>
<keyword id="KW-1207">Sterol metabolism</keyword>
<keyword id="KW-0812">Transmembrane</keyword>
<keyword id="KW-1133">Transmembrane helix</keyword>
<sequence length="427" mass="49418">MSEQESRDNAAVDAVRQKYGFGFSWLVLMIALPPLVYYLWICVTYYQGELVFTSDAAAWRRFWSHVAPPTWHAAGLYAAWFLGQAALQVWAPGPTVQGMKLPDGSRLDYRMNGIFSFLFTLAVVFGLVTMGWLDATVLYDQLGPLLTVVNIFTFVFAGFLYFWGLNGKQWERPTGRPFYDYFMGTALNPRIGSLDLKLFCEARPGMIFWLLMNLSMAAKQYELHGTVTVPMLLVVGFQSFYLIDYFIHEEAVLTTWDIKHEKFGWMLCWGDLVWLPFTYTLQAQYLVHHTHDLPVWGIIAIVALNLAGYAIFRGANIQKHHFRRDPNRIVWGKPAKYIKTKQGSLLLTSGWWGIARHMNYFGDLMIALSWCLPAAFGSPIPYFHIVYFTILLLHREKRDDAMCLAKYGEDWLQYRKKVPWRIVPKIY</sequence>
<organism evidence="5">
    <name type="scientific">Methylotuvimicrobium alcaliphilum (strain DSM 19304 / NCIMB 14124 / VKM B-2133 / 20Z)</name>
    <name type="common">Methylomicrobium alcaliphilum</name>
    <dbReference type="NCBI Taxonomy" id="1091494"/>
    <lineage>
        <taxon>Bacteria</taxon>
        <taxon>Pseudomonadati</taxon>
        <taxon>Pseudomonadota</taxon>
        <taxon>Gammaproteobacteria</taxon>
        <taxon>Methylococcales</taxon>
        <taxon>Methylococcaceae</taxon>
        <taxon>Methylotuvimicrobium</taxon>
    </lineage>
</organism>
<dbReference type="EC" id="1.3.1.70" evidence="1 5"/>
<dbReference type="EMBL" id="FO082060">
    <property type="protein sequence ID" value="CCE23001.1"/>
    <property type="molecule type" value="Genomic_DNA"/>
</dbReference>
<dbReference type="RefSeq" id="WP_014147797.1">
    <property type="nucleotide sequence ID" value="NC_016112.1"/>
</dbReference>
<dbReference type="PDB" id="4QUV">
    <property type="method" value="X-ray"/>
    <property type="resolution" value="2.74 A"/>
    <property type="chains" value="A/B=1-427"/>
</dbReference>
<dbReference type="PDBsum" id="4QUV"/>
<dbReference type="SMR" id="G4SW86"/>
<dbReference type="STRING" id="1091494.MEALZ_1312"/>
<dbReference type="KEGG" id="mah:MEALZ_1312"/>
<dbReference type="PATRIC" id="fig|271065.3.peg.1336"/>
<dbReference type="HOGENOM" id="CLU_015631_0_3_6"/>
<dbReference type="BRENDA" id="1.3.1.70">
    <property type="organism ID" value="8056"/>
</dbReference>
<dbReference type="EvolutionaryTrace" id="G4SW86"/>
<dbReference type="Proteomes" id="UP000008315">
    <property type="component" value="Chromosome"/>
</dbReference>
<dbReference type="GO" id="GO:0005886">
    <property type="term" value="C:plasma membrane"/>
    <property type="evidence" value="ECO:0007669"/>
    <property type="project" value="UniProtKB-SubCell"/>
</dbReference>
<dbReference type="GO" id="GO:0050613">
    <property type="term" value="F:Delta14-sterol reductase activity"/>
    <property type="evidence" value="ECO:0000314"/>
    <property type="project" value="UniProtKB"/>
</dbReference>
<dbReference type="GO" id="GO:0050661">
    <property type="term" value="F:NADP binding"/>
    <property type="evidence" value="ECO:0000314"/>
    <property type="project" value="UniProtKB"/>
</dbReference>
<dbReference type="GO" id="GO:0006696">
    <property type="term" value="P:ergosterol biosynthetic process"/>
    <property type="evidence" value="ECO:0000314"/>
    <property type="project" value="UniProtKB"/>
</dbReference>
<dbReference type="GO" id="GO:0016126">
    <property type="term" value="P:sterol biosynthetic process"/>
    <property type="evidence" value="ECO:0000314"/>
    <property type="project" value="UniProtKB"/>
</dbReference>
<dbReference type="FunFam" id="1.20.120.1630:FF:000011">
    <property type="entry name" value="Delta(14)-sterol reductase"/>
    <property type="match status" value="1"/>
</dbReference>
<dbReference type="Gene3D" id="1.20.120.1630">
    <property type="match status" value="1"/>
</dbReference>
<dbReference type="InterPro" id="IPR001171">
    <property type="entry name" value="ERG24_DHCR-like"/>
</dbReference>
<dbReference type="InterPro" id="IPR018083">
    <property type="entry name" value="Sterol_reductase_CS"/>
</dbReference>
<dbReference type="PANTHER" id="PTHR21257">
    <property type="entry name" value="DELTA(14)-STEROL REDUCTASE"/>
    <property type="match status" value="1"/>
</dbReference>
<dbReference type="Pfam" id="PF01222">
    <property type="entry name" value="ERG4_ERG24"/>
    <property type="match status" value="1"/>
</dbReference>
<dbReference type="PROSITE" id="PS01017">
    <property type="entry name" value="STEROL_REDUCT_1"/>
    <property type="match status" value="1"/>
</dbReference>
<dbReference type="PROSITE" id="PS01018">
    <property type="entry name" value="STEROL_REDUCT_2"/>
    <property type="match status" value="1"/>
</dbReference>
<proteinExistence type="evidence at protein level"/>
<name>ERG_META2</name>
<feature type="chain" id="PRO_0000436618" description="Delta(14)-sterol reductase">
    <location>
        <begin position="1"/>
        <end position="427"/>
    </location>
</feature>
<feature type="topological domain" description="Cytoplasmic" evidence="4">
    <location>
        <begin position="1"/>
        <end position="25"/>
    </location>
</feature>
<feature type="transmembrane region" description="Helical" evidence="4">
    <location>
        <begin position="26"/>
        <end position="46"/>
    </location>
</feature>
<feature type="topological domain" description="Periplasmic" evidence="4">
    <location>
        <begin position="47"/>
        <end position="70"/>
    </location>
</feature>
<feature type="transmembrane region" description="Helical" evidence="4">
    <location>
        <begin position="71"/>
        <end position="91"/>
    </location>
</feature>
<feature type="topological domain" description="Cytoplasmic" evidence="4">
    <location>
        <begin position="92"/>
        <end position="110"/>
    </location>
</feature>
<feature type="transmembrane region" description="Helical" evidence="4">
    <location>
        <begin position="111"/>
        <end position="131"/>
    </location>
</feature>
<feature type="topological domain" description="Periplasmic" evidence="4">
    <location>
        <begin position="132"/>
        <end position="141"/>
    </location>
</feature>
<feature type="transmembrane region" description="Helical" evidence="4">
    <location>
        <begin position="142"/>
        <end position="162"/>
    </location>
</feature>
<feature type="topological domain" description="Cytoplasmic" evidence="4">
    <location>
        <begin position="163"/>
        <end position="197"/>
    </location>
</feature>
<feature type="transmembrane region" description="Helical" evidence="4">
    <location>
        <begin position="198"/>
        <end position="218"/>
    </location>
</feature>
<feature type="topological domain" description="Periplasmic" evidence="4">
    <location>
        <begin position="219"/>
        <end position="226"/>
    </location>
</feature>
<feature type="transmembrane region" description="Helical" evidence="4">
    <location>
        <begin position="227"/>
        <end position="247"/>
    </location>
</feature>
<feature type="topological domain" description="Cytoplasmic" evidence="4">
    <location>
        <begin position="248"/>
        <end position="262"/>
    </location>
</feature>
<feature type="transmembrane region" description="Helical" evidence="4">
    <location>
        <begin position="263"/>
        <end position="283"/>
    </location>
</feature>
<feature type="topological domain" description="Periplasmic" evidence="3">
    <location>
        <begin position="284"/>
        <end position="291"/>
    </location>
</feature>
<feature type="transmembrane region" description="Helical" evidence="4">
    <location>
        <begin position="292"/>
        <end position="312"/>
    </location>
</feature>
<feature type="topological domain" description="Cytoplasmic" evidence="4">
    <location>
        <begin position="313"/>
        <end position="356"/>
    </location>
</feature>
<feature type="transmembrane region" description="Helical" evidence="4">
    <location>
        <begin position="357"/>
        <end position="377"/>
    </location>
</feature>
<feature type="topological domain" description="Periplasmic" evidence="4">
    <location>
        <position position="378"/>
    </location>
</feature>
<feature type="transmembrane region" description="Helical" evidence="4">
    <location>
        <begin position="379"/>
        <end position="399"/>
    </location>
</feature>
<feature type="topological domain" description="Cytoplasmic" evidence="4">
    <location>
        <begin position="400"/>
        <end position="427"/>
    </location>
</feature>
<feature type="binding site" evidence="1 7">
    <location>
        <position position="319"/>
    </location>
    <ligand>
        <name>NADP(+)</name>
        <dbReference type="ChEBI" id="CHEBI:58349"/>
    </ligand>
</feature>
<feature type="binding site" evidence="1 7">
    <location>
        <position position="323"/>
    </location>
    <ligand>
        <name>NADP(+)</name>
        <dbReference type="ChEBI" id="CHEBI:58349"/>
    </ligand>
</feature>
<feature type="binding site" evidence="1 7">
    <location>
        <position position="347"/>
    </location>
    <ligand>
        <name>NADP(+)</name>
        <dbReference type="ChEBI" id="CHEBI:58349"/>
    </ligand>
</feature>
<feature type="binding site" evidence="1 7">
    <location>
        <position position="352"/>
    </location>
    <ligand>
        <name>NADP(+)</name>
        <dbReference type="ChEBI" id="CHEBI:58349"/>
    </ligand>
</feature>
<feature type="binding site" evidence="1 7">
    <location>
        <begin position="359"/>
        <end position="360"/>
    </location>
    <ligand>
        <name>NADP(+)</name>
        <dbReference type="ChEBI" id="CHEBI:58349"/>
    </ligand>
</feature>
<feature type="binding site" evidence="1 7">
    <location>
        <position position="399"/>
    </location>
    <ligand>
        <name>NADP(+)</name>
        <dbReference type="ChEBI" id="CHEBI:58349"/>
    </ligand>
</feature>
<feature type="binding site" evidence="1 7">
    <location>
        <begin position="403"/>
        <end position="407"/>
    </location>
    <ligand>
        <name>NADP(+)</name>
        <dbReference type="ChEBI" id="CHEBI:58349"/>
    </ligand>
</feature>
<feature type="binding site" evidence="1 7">
    <location>
        <position position="414"/>
    </location>
    <ligand>
        <name>NADP(+)</name>
        <dbReference type="ChEBI" id="CHEBI:58349"/>
    </ligand>
</feature>
<feature type="mutagenesis site" description="Loss of catalytic activity; when associated with A-363." evidence="1">
    <original>Y</original>
    <variation>F</variation>
    <location>
        <position position="241"/>
    </location>
</feature>
<feature type="mutagenesis site" description="Loss of catalytic activity; when associated with A-414." evidence="1">
    <original>W</original>
    <variation>A</variation>
    <location>
        <position position="352"/>
    </location>
</feature>
<feature type="mutagenesis site" description="Loss of catalytic activity; when associated with A-360." evidence="1">
    <original>N</original>
    <variation>A</variation>
    <location>
        <position position="359"/>
    </location>
</feature>
<feature type="mutagenesis site" description="Loss of catalytic activity; when associated with A-359." evidence="1">
    <original>Y</original>
    <variation>A</variation>
    <location>
        <position position="360"/>
    </location>
</feature>
<feature type="mutagenesis site" description="Loss of catalytic activity; when associated with F-241." evidence="1">
    <original>D</original>
    <variation>A</variation>
    <location>
        <position position="363"/>
    </location>
</feature>
<feature type="mutagenesis site" description="Loss of catalytic activity." evidence="1">
    <original>R</original>
    <variation>A</variation>
    <location>
        <position position="395"/>
    </location>
</feature>
<feature type="mutagenesis site" description="Loss of catalytic activity; when associated with A-407." evidence="1">
    <original>K</original>
    <variation>A</variation>
    <location>
        <position position="406"/>
    </location>
</feature>
<feature type="mutagenesis site" description="Loss of catalytic activity; when associated with A-406." evidence="1">
    <original>Y</original>
    <variation>A</variation>
    <location>
        <position position="407"/>
    </location>
</feature>
<feature type="mutagenesis site" description="Loss of catalytic activity; when associated with A-352." evidence="1">
    <original>Y</original>
    <variation>A</variation>
    <location>
        <position position="414"/>
    </location>
</feature>
<feature type="helix" evidence="8">
    <location>
        <begin position="24"/>
        <end position="45"/>
    </location>
</feature>
<feature type="strand" evidence="8">
    <location>
        <begin position="46"/>
        <end position="48"/>
    </location>
</feature>
<feature type="helix" evidence="8">
    <location>
        <begin position="56"/>
        <end position="63"/>
    </location>
</feature>
<feature type="helix" evidence="8">
    <location>
        <begin position="71"/>
        <end position="90"/>
    </location>
</feature>
<feature type="strand" evidence="8">
    <location>
        <begin position="95"/>
        <end position="99"/>
    </location>
</feature>
<feature type="turn" evidence="8">
    <location>
        <begin position="101"/>
        <end position="103"/>
    </location>
</feature>
<feature type="strand" evidence="8">
    <location>
        <begin position="107"/>
        <end position="110"/>
    </location>
</feature>
<feature type="helix" evidence="8">
    <location>
        <begin position="113"/>
        <end position="129"/>
    </location>
</feature>
<feature type="helix" evidence="8">
    <location>
        <begin position="137"/>
        <end position="140"/>
    </location>
</feature>
<feature type="helix" evidence="8">
    <location>
        <begin position="142"/>
        <end position="163"/>
    </location>
</feature>
<feature type="helix" evidence="8">
    <location>
        <begin position="180"/>
        <end position="183"/>
    </location>
</feature>
<feature type="strand" evidence="8">
    <location>
        <begin position="185"/>
        <end position="188"/>
    </location>
</feature>
<feature type="helix" evidence="8">
    <location>
        <begin position="196"/>
        <end position="224"/>
    </location>
</feature>
<feature type="helix" evidence="8">
    <location>
        <begin position="229"/>
        <end position="247"/>
    </location>
</feature>
<feature type="helix" evidence="8">
    <location>
        <begin position="250"/>
        <end position="254"/>
    </location>
</feature>
<feature type="helix" evidence="8">
    <location>
        <begin position="256"/>
        <end position="259"/>
    </location>
</feature>
<feature type="helix" evidence="8">
    <location>
        <begin position="265"/>
        <end position="272"/>
    </location>
</feature>
<feature type="helix" evidence="8">
    <location>
        <begin position="274"/>
        <end position="279"/>
    </location>
</feature>
<feature type="helix" evidence="8">
    <location>
        <begin position="281"/>
        <end position="287"/>
    </location>
</feature>
<feature type="helix" evidence="8">
    <location>
        <begin position="295"/>
        <end position="323"/>
    </location>
</feature>
<feature type="strand" evidence="8">
    <location>
        <begin position="328"/>
        <end position="334"/>
    </location>
</feature>
<feature type="strand" evidence="8">
    <location>
        <begin position="337"/>
        <end position="340"/>
    </location>
</feature>
<feature type="turn" evidence="8">
    <location>
        <begin position="341"/>
        <end position="343"/>
    </location>
</feature>
<feature type="strand" evidence="8">
    <location>
        <begin position="344"/>
        <end position="347"/>
    </location>
</feature>
<feature type="helix" evidence="8">
    <location>
        <begin position="351"/>
        <end position="354"/>
    </location>
</feature>
<feature type="helix" evidence="8">
    <location>
        <begin position="358"/>
        <end position="371"/>
    </location>
</feature>
<feature type="helix" evidence="8">
    <location>
        <begin position="372"/>
        <end position="374"/>
    </location>
</feature>
<feature type="helix" evidence="8">
    <location>
        <begin position="380"/>
        <end position="382"/>
    </location>
</feature>
<feature type="helix" evidence="8">
    <location>
        <begin position="383"/>
        <end position="417"/>
    </location>
</feature>
<feature type="strand" evidence="8">
    <location>
        <begin position="421"/>
        <end position="425"/>
    </location>
</feature>
<accession>G4SW86</accession>